<comment type="function">
    <text evidence="1">Overproduction of CaiE stimulates the activity of CaiB and CaiD.</text>
</comment>
<comment type="pathway">
    <text evidence="1">Amine and polyamine metabolism; carnitine metabolism.</text>
</comment>
<comment type="similarity">
    <text evidence="1">Belongs to the transferase hexapeptide repeat family.</text>
</comment>
<organism>
    <name type="scientific">Salmonella typhi</name>
    <dbReference type="NCBI Taxonomy" id="90370"/>
    <lineage>
        <taxon>Bacteria</taxon>
        <taxon>Pseudomonadati</taxon>
        <taxon>Pseudomonadota</taxon>
        <taxon>Gammaproteobacteria</taxon>
        <taxon>Enterobacterales</taxon>
        <taxon>Enterobacteriaceae</taxon>
        <taxon>Salmonella</taxon>
    </lineage>
</organism>
<name>CAIE_SALTI</name>
<accession>Q8Z9L6</accession>
<accession>Q83T88</accession>
<gene>
    <name evidence="1" type="primary">caiE</name>
    <name type="ordered locus">STY0079</name>
    <name type="ordered locus">t0070</name>
</gene>
<protein>
    <recommendedName>
        <fullName evidence="1">Carnitine operon protein CaiE</fullName>
    </recommendedName>
</protein>
<keyword id="KW-0677">Repeat</keyword>
<keyword id="KW-0808">Transferase</keyword>
<sequence>MSYYAFEGLIPVVHPDAFVHPSAVLIGDVIVGAGVYIGPLASLRGDYGRLILEAGSNLQDGCIMHGYCDTDTIVHENGHIGHGAILHGCVVGRDALVGMNSVIMDGAVIGEESIVAAMSFVKAGFQGEARQLLVGSPARVLRQVTDQELYWKRLNTKEYQDLAIRCRTGLSETKPLTQVEENRPRLKGTTDVKPKSAQ</sequence>
<dbReference type="EMBL" id="AL513382">
    <property type="protein sequence ID" value="CAD01223.1"/>
    <property type="molecule type" value="Genomic_DNA"/>
</dbReference>
<dbReference type="EMBL" id="AE014613">
    <property type="protein sequence ID" value="AAO67803.1"/>
    <property type="molecule type" value="Genomic_DNA"/>
</dbReference>
<dbReference type="RefSeq" id="NP_454679.1">
    <property type="nucleotide sequence ID" value="NC_003198.1"/>
</dbReference>
<dbReference type="RefSeq" id="WP_000122865.1">
    <property type="nucleotide sequence ID" value="NZ_PZMG01000007.1"/>
</dbReference>
<dbReference type="SMR" id="Q8Z9L6"/>
<dbReference type="STRING" id="220341.gene:17584125"/>
<dbReference type="KEGG" id="stt:t0070"/>
<dbReference type="KEGG" id="sty:STY0079"/>
<dbReference type="PATRIC" id="fig|220341.7.peg.78"/>
<dbReference type="eggNOG" id="COG0663">
    <property type="taxonomic scope" value="Bacteria"/>
</dbReference>
<dbReference type="HOGENOM" id="CLU_064827_4_2_6"/>
<dbReference type="OMA" id="MPCYRLD"/>
<dbReference type="UniPathway" id="UPA00117"/>
<dbReference type="Proteomes" id="UP000000541">
    <property type="component" value="Chromosome"/>
</dbReference>
<dbReference type="Proteomes" id="UP000002670">
    <property type="component" value="Chromosome"/>
</dbReference>
<dbReference type="GO" id="GO:0016740">
    <property type="term" value="F:transferase activity"/>
    <property type="evidence" value="ECO:0007669"/>
    <property type="project" value="UniProtKB-KW"/>
</dbReference>
<dbReference type="GO" id="GO:0009437">
    <property type="term" value="P:carnitine metabolic process"/>
    <property type="evidence" value="ECO:0007669"/>
    <property type="project" value="UniProtKB-UniRule"/>
</dbReference>
<dbReference type="CDD" id="cd04745">
    <property type="entry name" value="LbH_paaY_like"/>
    <property type="match status" value="1"/>
</dbReference>
<dbReference type="FunFam" id="2.160.10.10:FF:000012">
    <property type="entry name" value="Carnitine operon protein CaiE"/>
    <property type="match status" value="1"/>
</dbReference>
<dbReference type="Gene3D" id="2.160.10.10">
    <property type="entry name" value="Hexapeptide repeat proteins"/>
    <property type="match status" value="1"/>
</dbReference>
<dbReference type="HAMAP" id="MF_01525">
    <property type="entry name" value="CaiE"/>
    <property type="match status" value="1"/>
</dbReference>
<dbReference type="InterPro" id="IPR023446">
    <property type="entry name" value="CaiE"/>
</dbReference>
<dbReference type="InterPro" id="IPR001451">
    <property type="entry name" value="Hexapep"/>
</dbReference>
<dbReference type="InterPro" id="IPR050484">
    <property type="entry name" value="Transf_Hexapept/Carb_Anhydrase"/>
</dbReference>
<dbReference type="InterPro" id="IPR011004">
    <property type="entry name" value="Trimer_LpxA-like_sf"/>
</dbReference>
<dbReference type="NCBIfam" id="NF010150">
    <property type="entry name" value="PRK13627.1"/>
    <property type="match status" value="1"/>
</dbReference>
<dbReference type="PANTHER" id="PTHR13061">
    <property type="entry name" value="DYNACTIN SUBUNIT P25"/>
    <property type="match status" value="1"/>
</dbReference>
<dbReference type="PANTHER" id="PTHR13061:SF29">
    <property type="entry name" value="GAMMA CARBONIC ANHYDRASE-LIKE 1, MITOCHONDRIAL-RELATED"/>
    <property type="match status" value="1"/>
</dbReference>
<dbReference type="Pfam" id="PF00132">
    <property type="entry name" value="Hexapep"/>
    <property type="match status" value="2"/>
</dbReference>
<dbReference type="SUPFAM" id="SSF51161">
    <property type="entry name" value="Trimeric LpxA-like enzymes"/>
    <property type="match status" value="1"/>
</dbReference>
<evidence type="ECO:0000255" key="1">
    <source>
        <dbReference type="HAMAP-Rule" id="MF_01525"/>
    </source>
</evidence>
<evidence type="ECO:0000256" key="2">
    <source>
        <dbReference type="SAM" id="MobiDB-lite"/>
    </source>
</evidence>
<evidence type="ECO:0000305" key="3"/>
<proteinExistence type="inferred from homology"/>
<reference key="1">
    <citation type="journal article" date="2001" name="Nature">
        <title>Complete genome sequence of a multiple drug resistant Salmonella enterica serovar Typhi CT18.</title>
        <authorList>
            <person name="Parkhill J."/>
            <person name="Dougan G."/>
            <person name="James K.D."/>
            <person name="Thomson N.R."/>
            <person name="Pickard D."/>
            <person name="Wain J."/>
            <person name="Churcher C.M."/>
            <person name="Mungall K.L."/>
            <person name="Bentley S.D."/>
            <person name="Holden M.T.G."/>
            <person name="Sebaihia M."/>
            <person name="Baker S."/>
            <person name="Basham D."/>
            <person name="Brooks K."/>
            <person name="Chillingworth T."/>
            <person name="Connerton P."/>
            <person name="Cronin A."/>
            <person name="Davis P."/>
            <person name="Davies R.M."/>
            <person name="Dowd L."/>
            <person name="White N."/>
            <person name="Farrar J."/>
            <person name="Feltwell T."/>
            <person name="Hamlin N."/>
            <person name="Haque A."/>
            <person name="Hien T.T."/>
            <person name="Holroyd S."/>
            <person name="Jagels K."/>
            <person name="Krogh A."/>
            <person name="Larsen T.S."/>
            <person name="Leather S."/>
            <person name="Moule S."/>
            <person name="O'Gaora P."/>
            <person name="Parry C."/>
            <person name="Quail M.A."/>
            <person name="Rutherford K.M."/>
            <person name="Simmonds M."/>
            <person name="Skelton J."/>
            <person name="Stevens K."/>
            <person name="Whitehead S."/>
            <person name="Barrell B.G."/>
        </authorList>
    </citation>
    <scope>NUCLEOTIDE SEQUENCE [LARGE SCALE GENOMIC DNA]</scope>
    <source>
        <strain>CT18</strain>
    </source>
</reference>
<reference key="2">
    <citation type="journal article" date="2003" name="J. Bacteriol.">
        <title>Comparative genomics of Salmonella enterica serovar Typhi strains Ty2 and CT18.</title>
        <authorList>
            <person name="Deng W."/>
            <person name="Liou S.-R."/>
            <person name="Plunkett G. III"/>
            <person name="Mayhew G.F."/>
            <person name="Rose D.J."/>
            <person name="Burland V."/>
            <person name="Kodoyianni V."/>
            <person name="Schwartz D.C."/>
            <person name="Blattner F.R."/>
        </authorList>
    </citation>
    <scope>NUCLEOTIDE SEQUENCE [LARGE SCALE GENOMIC DNA]</scope>
    <source>
        <strain>ATCC 700931 / Ty2</strain>
    </source>
</reference>
<feature type="chain" id="PRO_0000068725" description="Carnitine operon protein CaiE">
    <location>
        <begin position="1"/>
        <end position="198"/>
    </location>
</feature>
<feature type="region of interest" description="Disordered" evidence="2">
    <location>
        <begin position="179"/>
        <end position="198"/>
    </location>
</feature>
<feature type="compositionally biased region" description="Basic and acidic residues" evidence="2">
    <location>
        <begin position="180"/>
        <end position="198"/>
    </location>
</feature>
<feature type="sequence conflict" description="In Ref. 2; AAO67803." evidence="3" ref="2">
    <original>Y</original>
    <variation>H</variation>
    <location>
        <position position="150"/>
    </location>
</feature>